<gene>
    <name evidence="1" type="primary">rpoZ</name>
    <name type="ordered locus">FTH_1483</name>
</gene>
<feature type="chain" id="PRO_1000005932" description="DNA-directed RNA polymerase subunit omega">
    <location>
        <begin position="1"/>
        <end position="72"/>
    </location>
</feature>
<comment type="function">
    <text evidence="1">Promotes RNA polymerase assembly. Latches the N- and C-terminal regions of the beta' subunit thereby facilitating its interaction with the beta and alpha subunits.</text>
</comment>
<comment type="catalytic activity">
    <reaction evidence="1">
        <text>RNA(n) + a ribonucleoside 5'-triphosphate = RNA(n+1) + diphosphate</text>
        <dbReference type="Rhea" id="RHEA:21248"/>
        <dbReference type="Rhea" id="RHEA-COMP:14527"/>
        <dbReference type="Rhea" id="RHEA-COMP:17342"/>
        <dbReference type="ChEBI" id="CHEBI:33019"/>
        <dbReference type="ChEBI" id="CHEBI:61557"/>
        <dbReference type="ChEBI" id="CHEBI:140395"/>
        <dbReference type="EC" id="2.7.7.6"/>
    </reaction>
</comment>
<comment type="subunit">
    <text evidence="1">The RNAP catalytic core consists of 2 alpha, 1 beta, 1 beta' and 1 omega subunit. When a sigma factor is associated with the core the holoenzyme is formed, which can initiate transcription.</text>
</comment>
<comment type="similarity">
    <text evidence="1">Belongs to the RNA polymerase subunit omega family.</text>
</comment>
<evidence type="ECO:0000255" key="1">
    <source>
        <dbReference type="HAMAP-Rule" id="MF_00366"/>
    </source>
</evidence>
<proteinExistence type="inferred from homology"/>
<dbReference type="EC" id="2.7.7.6" evidence="1"/>
<dbReference type="EMBL" id="CP000437">
    <property type="protein sequence ID" value="ABI83289.1"/>
    <property type="molecule type" value="Genomic_DNA"/>
</dbReference>
<dbReference type="RefSeq" id="WP_003019409.1">
    <property type="nucleotide sequence ID" value="NC_017463.1"/>
</dbReference>
<dbReference type="SMR" id="Q0BKU5"/>
<dbReference type="KEGG" id="fth:FTH_1483"/>
<dbReference type="GO" id="GO:0000428">
    <property type="term" value="C:DNA-directed RNA polymerase complex"/>
    <property type="evidence" value="ECO:0007669"/>
    <property type="project" value="UniProtKB-KW"/>
</dbReference>
<dbReference type="GO" id="GO:0003677">
    <property type="term" value="F:DNA binding"/>
    <property type="evidence" value="ECO:0007669"/>
    <property type="project" value="UniProtKB-UniRule"/>
</dbReference>
<dbReference type="GO" id="GO:0003899">
    <property type="term" value="F:DNA-directed RNA polymerase activity"/>
    <property type="evidence" value="ECO:0007669"/>
    <property type="project" value="UniProtKB-UniRule"/>
</dbReference>
<dbReference type="GO" id="GO:0006351">
    <property type="term" value="P:DNA-templated transcription"/>
    <property type="evidence" value="ECO:0007669"/>
    <property type="project" value="UniProtKB-UniRule"/>
</dbReference>
<dbReference type="Gene3D" id="3.90.940.10">
    <property type="match status" value="1"/>
</dbReference>
<dbReference type="HAMAP" id="MF_00366">
    <property type="entry name" value="RNApol_bact_RpoZ"/>
    <property type="match status" value="1"/>
</dbReference>
<dbReference type="InterPro" id="IPR003716">
    <property type="entry name" value="DNA-dir_RNA_pol_omega"/>
</dbReference>
<dbReference type="InterPro" id="IPR006110">
    <property type="entry name" value="Pol_omega/Rpo6/RPB6"/>
</dbReference>
<dbReference type="InterPro" id="IPR036161">
    <property type="entry name" value="RPB6/omega-like_sf"/>
</dbReference>
<dbReference type="NCBIfam" id="TIGR00690">
    <property type="entry name" value="rpoZ"/>
    <property type="match status" value="1"/>
</dbReference>
<dbReference type="PANTHER" id="PTHR34476">
    <property type="entry name" value="DNA-DIRECTED RNA POLYMERASE SUBUNIT OMEGA"/>
    <property type="match status" value="1"/>
</dbReference>
<dbReference type="PANTHER" id="PTHR34476:SF1">
    <property type="entry name" value="DNA-DIRECTED RNA POLYMERASE SUBUNIT OMEGA"/>
    <property type="match status" value="1"/>
</dbReference>
<dbReference type="Pfam" id="PF01192">
    <property type="entry name" value="RNA_pol_Rpb6"/>
    <property type="match status" value="1"/>
</dbReference>
<dbReference type="SMART" id="SM01409">
    <property type="entry name" value="RNA_pol_Rpb6"/>
    <property type="match status" value="1"/>
</dbReference>
<dbReference type="SUPFAM" id="SSF63562">
    <property type="entry name" value="RPB6/omega subunit-like"/>
    <property type="match status" value="1"/>
</dbReference>
<accession>Q0BKU5</accession>
<reference key="1">
    <citation type="journal article" date="2006" name="J. Bacteriol.">
        <title>Chromosome rearrangement and diversification of Francisella tularensis revealed by the type B (OSU18) genome sequence.</title>
        <authorList>
            <person name="Petrosino J.F."/>
            <person name="Xiang Q."/>
            <person name="Karpathy S.E."/>
            <person name="Jiang H."/>
            <person name="Yerrapragada S."/>
            <person name="Liu Y."/>
            <person name="Gioia J."/>
            <person name="Hemphill L."/>
            <person name="Gonzalez A."/>
            <person name="Raghavan T.M."/>
            <person name="Uzman A."/>
            <person name="Fox G.E."/>
            <person name="Highlander S."/>
            <person name="Reichard M."/>
            <person name="Morton R.J."/>
            <person name="Clinkenbeard K.D."/>
            <person name="Weinstock G.M."/>
        </authorList>
    </citation>
    <scope>NUCLEOTIDE SEQUENCE [LARGE SCALE GENOMIC DNA]</scope>
    <source>
        <strain>OSU18</strain>
    </source>
</reference>
<name>RPOZ_FRATO</name>
<sequence>MARVTVEDCLDKVETRFDLVVLASMRANKILKNGYSESMENEKKEKATVVALREIAESEITPEQILRNEIEG</sequence>
<organism>
    <name type="scientific">Francisella tularensis subsp. holarctica (strain OSU18)</name>
    <dbReference type="NCBI Taxonomy" id="393011"/>
    <lineage>
        <taxon>Bacteria</taxon>
        <taxon>Pseudomonadati</taxon>
        <taxon>Pseudomonadota</taxon>
        <taxon>Gammaproteobacteria</taxon>
        <taxon>Thiotrichales</taxon>
        <taxon>Francisellaceae</taxon>
        <taxon>Francisella</taxon>
    </lineage>
</organism>
<protein>
    <recommendedName>
        <fullName evidence="1">DNA-directed RNA polymerase subunit omega</fullName>
        <shortName evidence="1">RNAP omega subunit</shortName>
        <ecNumber evidence="1">2.7.7.6</ecNumber>
    </recommendedName>
    <alternativeName>
        <fullName evidence="1">RNA polymerase omega subunit</fullName>
    </alternativeName>
    <alternativeName>
        <fullName evidence="1">Transcriptase subunit omega</fullName>
    </alternativeName>
</protein>
<keyword id="KW-0240">DNA-directed RNA polymerase</keyword>
<keyword id="KW-0548">Nucleotidyltransferase</keyword>
<keyword id="KW-0804">Transcription</keyword>
<keyword id="KW-0808">Transferase</keyword>